<comment type="function">
    <text evidence="1">May regulate apoptosis of neural progenitor cells during their differentiation.</text>
</comment>
<comment type="interaction">
    <interactant intactId="EBI-11145350">
        <id>Q9NSY0</id>
    </interactant>
    <interactant intactId="EBI-739485">
        <id>Q9Y3Q8</id>
        <label>TSC22D4</label>
    </interactant>
    <organismsDiffer>false</organismsDiffer>
    <experiments>8</experiments>
</comment>
<comment type="subcellular location">
    <subcellularLocation>
        <location evidence="1">Cytoplasm</location>
    </subcellularLocation>
</comment>
<comment type="alternative products">
    <event type="alternative splicing"/>
    <isoform>
        <id>Q9NSY0-3</id>
        <name>1</name>
        <sequence type="displayed"/>
    </isoform>
    <isoform>
        <id>Q9NSY0-2</id>
        <name evidence="5 6">2</name>
        <sequence type="described" ref="VSP_039308 VSP_039309"/>
    </isoform>
    <isoform>
        <id>Q9NSY0-4</id>
        <name>3</name>
        <sequence type="described" ref="VSP_039308 VSP_039309 VSP_039310"/>
    </isoform>
    <isoform>
        <id>Q9NSY0-5</id>
        <name>4</name>
        <sequence type="described" ref="VSP_039311 VSP_039312 VSP_039313"/>
    </isoform>
</comment>
<comment type="domain">
    <text>The protein kinase domain is predicted to be catalytically inactive.</text>
</comment>
<comment type="miscellaneous">
    <molecule>Isoform 4</molecule>
    <text evidence="10">May be produced at very low levels due to a premature stop codon in the mRNA, leading to nonsense-mediated mRNA decay.</text>
</comment>
<comment type="similarity">
    <text evidence="3">Belongs to the protein kinase superfamily. Ser/Thr protein kinase family.</text>
</comment>
<comment type="sequence caution" evidence="10">
    <conflict type="miscellaneous discrepancy">
        <sequence resource="EMBL-CDS" id="AAI13874"/>
    </conflict>
    <text>Probable cloning artifact.</text>
</comment>
<comment type="sequence caution" evidence="10">
    <conflict type="miscellaneous discrepancy">
        <sequence resource="EMBL-CDS" id="CAB70864"/>
    </conflict>
    <text>Wrong choice of CDS.</text>
</comment>
<gene>
    <name evidence="13" type="primary">NRBP2</name>
    <name type="ORF">PP9320</name>
    <name type="ORF">TRG16</name>
</gene>
<feature type="chain" id="PRO_0000225608" description="Nuclear receptor-binding protein 2">
    <location>
        <begin position="1"/>
        <end position="501"/>
    </location>
</feature>
<feature type="domain" description="Protein kinase" evidence="3">
    <location>
        <begin position="38"/>
        <end position="306"/>
    </location>
</feature>
<feature type="region of interest" description="Disordered" evidence="4">
    <location>
        <begin position="1"/>
        <end position="33"/>
    </location>
</feature>
<feature type="compositionally biased region" description="Basic and acidic residues" evidence="4">
    <location>
        <begin position="7"/>
        <end position="19"/>
    </location>
</feature>
<feature type="compositionally biased region" description="Acidic residues" evidence="4">
    <location>
        <begin position="20"/>
        <end position="30"/>
    </location>
</feature>
<feature type="modified residue" description="Phosphothreonine" evidence="2">
    <location>
        <position position="409"/>
    </location>
</feature>
<feature type="modified residue" description="Phosphothreonine" evidence="14">
    <location>
        <position position="411"/>
    </location>
</feature>
<feature type="splice variant" id="VSP_039308" description="In isoform 2 and isoform 3." evidence="7 9">
    <location>
        <begin position="1"/>
        <end position="243"/>
    </location>
</feature>
<feature type="splice variant" id="VSP_039311" description="In isoform 4." evidence="8">
    <location>
        <begin position="1"/>
        <end position="48"/>
    </location>
</feature>
<feature type="splice variant" id="VSP_039312" description="In isoform 4." evidence="8">
    <original>AWKRWCTQILSALSFLHACSPPI</original>
    <variation>VWGAGWGSHGDRTGLGQPRGLGW</variation>
    <location>
        <begin position="149"/>
        <end position="171"/>
    </location>
</feature>
<feature type="splice variant" id="VSP_039313" description="In isoform 4." evidence="8">
    <location>
        <begin position="172"/>
        <end position="501"/>
    </location>
</feature>
<feature type="splice variant" id="VSP_039309" description="In isoform 2 and isoform 3." evidence="7 9">
    <original>MCALEMAVLEIQTNGDTRVTEEAIARARHSLSDPNMR</original>
    <variation>MVLQSQNPAVLKLRGPGPGLAAAAGTPPYGHPCMSCVSLRRDMGNSGATSPRTAGPEQRALAHHQPLLPVPQ</variation>
    <location>
        <begin position="244"/>
        <end position="280"/>
    </location>
</feature>
<feature type="splice variant" id="VSP_039310" description="In isoform 3." evidence="9">
    <original>TDSAQDLASELVHYGFLHEDDRMKLAAFLESTFLKYRGTQA</original>
    <variation>SRLGRGLGRRAVTPGGGWAAASCLALRHCLSGQRPGPRLGARALWLPPRGRPDEAGRLPGEHLPQVPWDPGL</variation>
    <location>
        <begin position="461"/>
        <end position="501"/>
    </location>
</feature>
<feature type="sequence conflict" description="In Ref. 1; AAQ18040." evidence="10" ref="1">
    <original>V</original>
    <variation>A</variation>
    <location sequence="Q9NSY0-4">
        <position position="10"/>
    </location>
</feature>
<dbReference type="EMBL" id="AY277601">
    <property type="protein sequence ID" value="AAQ18040.1"/>
    <property type="molecule type" value="mRNA"/>
</dbReference>
<dbReference type="EMBL" id="AK293943">
    <property type="protein sequence ID" value="BAG57320.1"/>
    <property type="molecule type" value="mRNA"/>
</dbReference>
<dbReference type="EMBL" id="AF318376">
    <property type="protein sequence ID" value="AAL55883.1"/>
    <property type="molecule type" value="mRNA"/>
</dbReference>
<dbReference type="EMBL" id="AL137662">
    <property type="protein sequence ID" value="CAB70864.1"/>
    <property type="status" value="ALT_SEQ"/>
    <property type="molecule type" value="mRNA"/>
</dbReference>
<dbReference type="EMBL" id="AL834530">
    <property type="protein sequence ID" value="CAD39186.1"/>
    <property type="molecule type" value="mRNA"/>
</dbReference>
<dbReference type="EMBL" id="AC105049">
    <property type="status" value="NOT_ANNOTATED_CDS"/>
    <property type="molecule type" value="Genomic_DNA"/>
</dbReference>
<dbReference type="EMBL" id="BC113873">
    <property type="protein sequence ID" value="AAI13874.1"/>
    <property type="status" value="ALT_SEQ"/>
    <property type="molecule type" value="mRNA"/>
</dbReference>
<dbReference type="EMBL" id="CR457350">
    <property type="protein sequence ID" value="CAG33631.1"/>
    <property type="molecule type" value="mRNA"/>
</dbReference>
<dbReference type="CCDS" id="CCDS34959.2">
    <molecule id="Q9NSY0-3"/>
</dbReference>
<dbReference type="PIR" id="T46491">
    <property type="entry name" value="T46491"/>
</dbReference>
<dbReference type="RefSeq" id="NP_848659.2">
    <molecule id="Q9NSY0-3"/>
    <property type="nucleotide sequence ID" value="NM_178564.4"/>
</dbReference>
<dbReference type="SMR" id="Q9NSY0"/>
<dbReference type="BioGRID" id="131044">
    <property type="interactions" value="64"/>
</dbReference>
<dbReference type="FunCoup" id="Q9NSY0">
    <property type="interactions" value="1322"/>
</dbReference>
<dbReference type="IntAct" id="Q9NSY0">
    <property type="interactions" value="62"/>
</dbReference>
<dbReference type="STRING" id="9606.ENSP00000414055"/>
<dbReference type="GlyGen" id="Q9NSY0">
    <property type="glycosylation" value="1 site"/>
</dbReference>
<dbReference type="iPTMnet" id="Q9NSY0"/>
<dbReference type="PhosphoSitePlus" id="Q9NSY0"/>
<dbReference type="BioMuta" id="NRBP2"/>
<dbReference type="DMDM" id="298286835"/>
<dbReference type="CPTAC" id="non-CPTAC-5674"/>
<dbReference type="jPOST" id="Q9NSY0"/>
<dbReference type="MassIVE" id="Q9NSY0"/>
<dbReference type="PaxDb" id="9606-ENSP00000414055"/>
<dbReference type="PeptideAtlas" id="Q9NSY0"/>
<dbReference type="ProteomicsDB" id="82590">
    <molecule id="Q9NSY0-3"/>
</dbReference>
<dbReference type="ProteomicsDB" id="82591">
    <molecule id="Q9NSY0-2"/>
</dbReference>
<dbReference type="ProteomicsDB" id="82592">
    <molecule id="Q9NSY0-4"/>
</dbReference>
<dbReference type="ProteomicsDB" id="82593">
    <molecule id="Q9NSY0-5"/>
</dbReference>
<dbReference type="Pumba" id="Q9NSY0"/>
<dbReference type="Antibodypedia" id="28122">
    <property type="antibodies" value="195 antibodies from 25 providers"/>
</dbReference>
<dbReference type="DNASU" id="340371"/>
<dbReference type="Ensembl" id="ENST00000442628.7">
    <molecule id="Q9NSY0-3"/>
    <property type="protein sequence ID" value="ENSP00000414055.2"/>
    <property type="gene ID" value="ENSG00000185189.18"/>
</dbReference>
<dbReference type="GeneID" id="340371"/>
<dbReference type="KEGG" id="hsa:340371"/>
<dbReference type="MANE-Select" id="ENST00000442628.7">
    <property type="protein sequence ID" value="ENSP00000414055.2"/>
    <property type="RefSeq nucleotide sequence ID" value="NM_178564.4"/>
    <property type="RefSeq protein sequence ID" value="NP_848659.2"/>
</dbReference>
<dbReference type="UCSC" id="uc011lkt.3">
    <molecule id="Q9NSY0-3"/>
    <property type="organism name" value="human"/>
</dbReference>
<dbReference type="AGR" id="HGNC:19339"/>
<dbReference type="CTD" id="340371"/>
<dbReference type="DisGeNET" id="340371"/>
<dbReference type="GeneCards" id="NRBP2"/>
<dbReference type="HGNC" id="HGNC:19339">
    <property type="gene designation" value="NRBP2"/>
</dbReference>
<dbReference type="HPA" id="ENSG00000185189">
    <property type="expression patterns" value="Tissue enhanced (brain)"/>
</dbReference>
<dbReference type="MIM" id="615563">
    <property type="type" value="gene"/>
</dbReference>
<dbReference type="neXtProt" id="NX_Q9NSY0"/>
<dbReference type="OpenTargets" id="ENSG00000185189"/>
<dbReference type="PharmGKB" id="PA134891143"/>
<dbReference type="VEuPathDB" id="HostDB:ENSG00000185189"/>
<dbReference type="eggNOG" id="KOG1266">
    <property type="taxonomic scope" value="Eukaryota"/>
</dbReference>
<dbReference type="GeneTree" id="ENSGT00940000160430"/>
<dbReference type="HOGENOM" id="CLU_024273_0_0_1"/>
<dbReference type="InParanoid" id="Q9NSY0"/>
<dbReference type="OMA" id="MNFACAR"/>
<dbReference type="OrthoDB" id="1034557at2759"/>
<dbReference type="PAN-GO" id="Q9NSY0">
    <property type="GO annotations" value="6 GO annotations based on evolutionary models"/>
</dbReference>
<dbReference type="PhylomeDB" id="Q9NSY0"/>
<dbReference type="TreeFam" id="TF315519"/>
<dbReference type="PathwayCommons" id="Q9NSY0"/>
<dbReference type="SignaLink" id="Q9NSY0"/>
<dbReference type="BioGRID-ORCS" id="340371">
    <property type="hits" value="16 hits in 1191 CRISPR screens"/>
</dbReference>
<dbReference type="ChiTaRS" id="NRBP2">
    <property type="organism name" value="human"/>
</dbReference>
<dbReference type="GenomeRNAi" id="340371"/>
<dbReference type="Pharos" id="Q9NSY0">
    <property type="development level" value="Tbio"/>
</dbReference>
<dbReference type="PRO" id="PR:Q9NSY0"/>
<dbReference type="Proteomes" id="UP000005640">
    <property type="component" value="Chromosome 8"/>
</dbReference>
<dbReference type="RNAct" id="Q9NSY0">
    <property type="molecule type" value="protein"/>
</dbReference>
<dbReference type="Bgee" id="ENSG00000185189">
    <property type="expression patterns" value="Expressed in cerebellar vermis and 100 other cell types or tissues"/>
</dbReference>
<dbReference type="ExpressionAtlas" id="Q9NSY0">
    <property type="expression patterns" value="baseline and differential"/>
</dbReference>
<dbReference type="GO" id="GO:0005737">
    <property type="term" value="C:cytoplasm"/>
    <property type="evidence" value="ECO:0000250"/>
    <property type="project" value="UniProtKB"/>
</dbReference>
<dbReference type="GO" id="GO:0005524">
    <property type="term" value="F:ATP binding"/>
    <property type="evidence" value="ECO:0007669"/>
    <property type="project" value="InterPro"/>
</dbReference>
<dbReference type="GO" id="GO:0004674">
    <property type="term" value="F:protein serine/threonine kinase activity"/>
    <property type="evidence" value="ECO:0000318"/>
    <property type="project" value="GO_Central"/>
</dbReference>
<dbReference type="GO" id="GO:0006974">
    <property type="term" value="P:DNA damage response"/>
    <property type="evidence" value="ECO:0000318"/>
    <property type="project" value="GO_Central"/>
</dbReference>
<dbReference type="GO" id="GO:0016242">
    <property type="term" value="P:negative regulation of macroautophagy"/>
    <property type="evidence" value="ECO:0000315"/>
    <property type="project" value="BHF-UCL"/>
</dbReference>
<dbReference type="GO" id="GO:0043524">
    <property type="term" value="P:negative regulation of neuron apoptotic process"/>
    <property type="evidence" value="ECO:0000250"/>
    <property type="project" value="UniProtKB"/>
</dbReference>
<dbReference type="GO" id="GO:0030182">
    <property type="term" value="P:neuron differentiation"/>
    <property type="evidence" value="ECO:0000250"/>
    <property type="project" value="UniProtKB"/>
</dbReference>
<dbReference type="CDD" id="cd14035">
    <property type="entry name" value="PK_MADML"/>
    <property type="match status" value="1"/>
</dbReference>
<dbReference type="FunFam" id="3.30.200.20:FF:000098">
    <property type="entry name" value="Nuclear receptor-binding protein 1"/>
    <property type="match status" value="1"/>
</dbReference>
<dbReference type="FunFam" id="1.10.510.10:FF:000266">
    <property type="entry name" value="nuclear receptor-binding protein 2"/>
    <property type="match status" value="1"/>
</dbReference>
<dbReference type="Gene3D" id="3.30.200.20">
    <property type="entry name" value="Phosphorylase Kinase, domain 1"/>
    <property type="match status" value="1"/>
</dbReference>
<dbReference type="Gene3D" id="1.10.510.10">
    <property type="entry name" value="Transferase(Phosphotransferase) domain 1"/>
    <property type="match status" value="1"/>
</dbReference>
<dbReference type="InterPro" id="IPR011009">
    <property type="entry name" value="Kinase-like_dom_sf"/>
</dbReference>
<dbReference type="InterPro" id="IPR042697">
    <property type="entry name" value="NRBP2_PK"/>
</dbReference>
<dbReference type="InterPro" id="IPR000719">
    <property type="entry name" value="Prot_kinase_dom"/>
</dbReference>
<dbReference type="InterPro" id="IPR050588">
    <property type="entry name" value="WNK_Ser-Thr_kinase"/>
</dbReference>
<dbReference type="PANTHER" id="PTHR13902">
    <property type="entry name" value="SERINE/THREONINE-PROTEIN KINASE WNK WITH NO LYSINE -RELATED"/>
    <property type="match status" value="1"/>
</dbReference>
<dbReference type="Pfam" id="PF00069">
    <property type="entry name" value="Pkinase"/>
    <property type="match status" value="1"/>
</dbReference>
<dbReference type="SUPFAM" id="SSF56112">
    <property type="entry name" value="Protein kinase-like (PK-like)"/>
    <property type="match status" value="1"/>
</dbReference>
<dbReference type="PROSITE" id="PS50011">
    <property type="entry name" value="PROTEIN_KINASE_DOM"/>
    <property type="match status" value="1"/>
</dbReference>
<sequence>MAAPEPAPRRAREREREREDESEDESDILEESPCGRWQKRREQVNQGNMPGLQSTFLAMDTEEGVEVVWNELHFGDRKAFAAHEEKIQTVFEQLVLVDHPNIVKLHKYWLDTSEACARVIFITEYVSSGSLKQFLKKTKKNHKAMNARAWKRWCTQILSALSFLHACSPPIIHGNLTSDTIFIQHNGLIKIGSVWHRIFSNALPDDLRSPIRAEREELRNLHFFPPEYGEVADGTAVDIFSFGMCALEMAVLEIQTNGDTRVTEEAIARARHSLSDPNMREFILCCLARDPARRPSAHSLLFHRVLFEVHSLKLLAAHCFIQHQYLMPENVVEEKTKAMDLHAVLAELPRPRRPPLQWRYSEVSFMELDKFLEDVRNGIYPLMNFAATRPLGLPRVLAPPPEEVQKAKTPTPEPFDSETRKVIQMQCNLERSEDKARWHLTLLLVLEDRLHRQLTYDLLPTDSAQDLASELVHYGFLHEDDRMKLAAFLESTFLKYRGTQA</sequence>
<name>NRBP2_HUMAN</name>
<accession>Q9NSY0</accession>
<accession>B4DF59</accession>
<accession>Q2HIX8</accession>
<accession>Q597G7</accession>
<accession>Q8NCX8</accession>
<accession>Q8WYS5</accession>
<organism>
    <name type="scientific">Homo sapiens</name>
    <name type="common">Human</name>
    <dbReference type="NCBI Taxonomy" id="9606"/>
    <lineage>
        <taxon>Eukaryota</taxon>
        <taxon>Metazoa</taxon>
        <taxon>Chordata</taxon>
        <taxon>Craniata</taxon>
        <taxon>Vertebrata</taxon>
        <taxon>Euteleostomi</taxon>
        <taxon>Mammalia</taxon>
        <taxon>Eutheria</taxon>
        <taxon>Euarchontoglires</taxon>
        <taxon>Primates</taxon>
        <taxon>Haplorrhini</taxon>
        <taxon>Catarrhini</taxon>
        <taxon>Hominidae</taxon>
        <taxon>Homo</taxon>
    </lineage>
</organism>
<reference evidence="10 12" key="1">
    <citation type="submission" date="2003-04" db="EMBL/GenBank/DDBJ databases">
        <title>Identification of a human transforming gene.</title>
        <authorList>
            <person name="Kim J.W."/>
        </authorList>
    </citation>
    <scope>NUCLEOTIDE SEQUENCE [LARGE SCALE MRNA] (ISOFORM 3)</scope>
</reference>
<reference key="2">
    <citation type="journal article" date="2004" name="Nat. Genet.">
        <title>Complete sequencing and characterization of 21,243 full-length human cDNAs.</title>
        <authorList>
            <person name="Ota T."/>
            <person name="Suzuki Y."/>
            <person name="Nishikawa T."/>
            <person name="Otsuki T."/>
            <person name="Sugiyama T."/>
            <person name="Irie R."/>
            <person name="Wakamatsu A."/>
            <person name="Hayashi K."/>
            <person name="Sato H."/>
            <person name="Nagai K."/>
            <person name="Kimura K."/>
            <person name="Makita H."/>
            <person name="Sekine M."/>
            <person name="Obayashi M."/>
            <person name="Nishi T."/>
            <person name="Shibahara T."/>
            <person name="Tanaka T."/>
            <person name="Ishii S."/>
            <person name="Yamamoto J."/>
            <person name="Saito K."/>
            <person name="Kawai Y."/>
            <person name="Isono Y."/>
            <person name="Nakamura Y."/>
            <person name="Nagahari K."/>
            <person name="Murakami K."/>
            <person name="Yasuda T."/>
            <person name="Iwayanagi T."/>
            <person name="Wagatsuma M."/>
            <person name="Shiratori A."/>
            <person name="Sudo H."/>
            <person name="Hosoiri T."/>
            <person name="Kaku Y."/>
            <person name="Kodaira H."/>
            <person name="Kondo H."/>
            <person name="Sugawara M."/>
            <person name="Takahashi M."/>
            <person name="Kanda K."/>
            <person name="Yokoi T."/>
            <person name="Furuya T."/>
            <person name="Kikkawa E."/>
            <person name="Omura Y."/>
            <person name="Abe K."/>
            <person name="Kamihara K."/>
            <person name="Katsuta N."/>
            <person name="Sato K."/>
            <person name="Tanikawa M."/>
            <person name="Yamazaki M."/>
            <person name="Ninomiya K."/>
            <person name="Ishibashi T."/>
            <person name="Yamashita H."/>
            <person name="Murakawa K."/>
            <person name="Fujimori K."/>
            <person name="Tanai H."/>
            <person name="Kimata M."/>
            <person name="Watanabe M."/>
            <person name="Hiraoka S."/>
            <person name="Chiba Y."/>
            <person name="Ishida S."/>
            <person name="Ono Y."/>
            <person name="Takiguchi S."/>
            <person name="Watanabe S."/>
            <person name="Yosida M."/>
            <person name="Hotuta T."/>
            <person name="Kusano J."/>
            <person name="Kanehori K."/>
            <person name="Takahashi-Fujii A."/>
            <person name="Hara H."/>
            <person name="Tanase T.-O."/>
            <person name="Nomura Y."/>
            <person name="Togiya S."/>
            <person name="Komai F."/>
            <person name="Hara R."/>
            <person name="Takeuchi K."/>
            <person name="Arita M."/>
            <person name="Imose N."/>
            <person name="Musashino K."/>
            <person name="Yuuki H."/>
            <person name="Oshima A."/>
            <person name="Sasaki N."/>
            <person name="Aotsuka S."/>
            <person name="Yoshikawa Y."/>
            <person name="Matsunawa H."/>
            <person name="Ichihara T."/>
            <person name="Shiohata N."/>
            <person name="Sano S."/>
            <person name="Moriya S."/>
            <person name="Momiyama H."/>
            <person name="Satoh N."/>
            <person name="Takami S."/>
            <person name="Terashima Y."/>
            <person name="Suzuki O."/>
            <person name="Nakagawa S."/>
            <person name="Senoh A."/>
            <person name="Mizoguchi H."/>
            <person name="Goto Y."/>
            <person name="Shimizu F."/>
            <person name="Wakebe H."/>
            <person name="Hishigaki H."/>
            <person name="Watanabe T."/>
            <person name="Sugiyama A."/>
            <person name="Takemoto M."/>
            <person name="Kawakami B."/>
            <person name="Yamazaki M."/>
            <person name="Watanabe K."/>
            <person name="Kumagai A."/>
            <person name="Itakura S."/>
            <person name="Fukuzumi Y."/>
            <person name="Fujimori Y."/>
            <person name="Komiyama M."/>
            <person name="Tashiro H."/>
            <person name="Tanigami A."/>
            <person name="Fujiwara T."/>
            <person name="Ono T."/>
            <person name="Yamada K."/>
            <person name="Fujii Y."/>
            <person name="Ozaki K."/>
            <person name="Hirao M."/>
            <person name="Ohmori Y."/>
            <person name="Kawabata A."/>
            <person name="Hikiji T."/>
            <person name="Kobatake N."/>
            <person name="Inagaki H."/>
            <person name="Ikema Y."/>
            <person name="Okamoto S."/>
            <person name="Okitani R."/>
            <person name="Kawakami T."/>
            <person name="Noguchi S."/>
            <person name="Itoh T."/>
            <person name="Shigeta K."/>
            <person name="Senba T."/>
            <person name="Matsumura K."/>
            <person name="Nakajima Y."/>
            <person name="Mizuno T."/>
            <person name="Morinaga M."/>
            <person name="Sasaki M."/>
            <person name="Togashi T."/>
            <person name="Oyama M."/>
            <person name="Hata H."/>
            <person name="Watanabe M."/>
            <person name="Komatsu T."/>
            <person name="Mizushima-Sugano J."/>
            <person name="Satoh T."/>
            <person name="Shirai Y."/>
            <person name="Takahashi Y."/>
            <person name="Nakagawa K."/>
            <person name="Okumura K."/>
            <person name="Nagase T."/>
            <person name="Nomura N."/>
            <person name="Kikuchi H."/>
            <person name="Masuho Y."/>
            <person name="Yamashita R."/>
            <person name="Nakai K."/>
            <person name="Yada T."/>
            <person name="Nakamura Y."/>
            <person name="Ohara O."/>
            <person name="Isogai T."/>
            <person name="Sugano S."/>
        </authorList>
    </citation>
    <scope>NUCLEOTIDE SEQUENCE [LARGE SCALE MRNA] (ISOFORM 1)</scope>
    <source>
        <tissue>Cerebellum</tissue>
    </source>
</reference>
<reference evidence="10 11" key="3">
    <citation type="journal article" date="2004" name="Proc. Natl. Acad. Sci. U.S.A.">
        <title>Large-scale cDNA transfection screening for genes related to cancer development and progression.</title>
        <authorList>
            <person name="Wan D."/>
            <person name="Gong Y."/>
            <person name="Qin W."/>
            <person name="Zhang P."/>
            <person name="Li J."/>
            <person name="Wei L."/>
            <person name="Zhou X."/>
            <person name="Li H."/>
            <person name="Qiu X."/>
            <person name="Zhong F."/>
            <person name="He L."/>
            <person name="Yu J."/>
            <person name="Yao G."/>
            <person name="Jiang H."/>
            <person name="Qian L."/>
            <person name="Yu Y."/>
            <person name="Shu H."/>
            <person name="Chen X."/>
            <person name="Xu H."/>
            <person name="Guo M."/>
            <person name="Pan Z."/>
            <person name="Chen Y."/>
            <person name="Ge C."/>
            <person name="Yang S."/>
            <person name="Gu J."/>
        </authorList>
    </citation>
    <scope>NUCLEOTIDE SEQUENCE [LARGE SCALE MRNA] (ISOFORM 2)</scope>
</reference>
<reference key="4">
    <citation type="journal article" date="2007" name="BMC Genomics">
        <title>The full-ORF clone resource of the German cDNA consortium.</title>
        <authorList>
            <person name="Bechtel S."/>
            <person name="Rosenfelder H."/>
            <person name="Duda A."/>
            <person name="Schmidt C.P."/>
            <person name="Ernst U."/>
            <person name="Wellenreuther R."/>
            <person name="Mehrle A."/>
            <person name="Schuster C."/>
            <person name="Bahr A."/>
            <person name="Bloecker H."/>
            <person name="Heubner D."/>
            <person name="Hoerlein A."/>
            <person name="Michel G."/>
            <person name="Wedler H."/>
            <person name="Koehrer K."/>
            <person name="Ottenwaelder B."/>
            <person name="Poustka A."/>
            <person name="Wiemann S."/>
            <person name="Schupp I."/>
        </authorList>
    </citation>
    <scope>NUCLEOTIDE SEQUENCE [LARGE SCALE MRNA] (ISOFORM 4)</scope>
    <scope>NUCLEOTIDE SEQUENCE [LARGE SCALE MRNA] OF 208-501 (ISOFORM 1)</scope>
    <source>
        <tissue>Testis</tissue>
    </source>
</reference>
<reference key="5">
    <citation type="journal article" date="2006" name="Nature">
        <title>DNA sequence and analysis of human chromosome 8.</title>
        <authorList>
            <person name="Nusbaum C."/>
            <person name="Mikkelsen T.S."/>
            <person name="Zody M.C."/>
            <person name="Asakawa S."/>
            <person name="Taudien S."/>
            <person name="Garber M."/>
            <person name="Kodira C.D."/>
            <person name="Schueler M.G."/>
            <person name="Shimizu A."/>
            <person name="Whittaker C.A."/>
            <person name="Chang J.L."/>
            <person name="Cuomo C.A."/>
            <person name="Dewar K."/>
            <person name="FitzGerald M.G."/>
            <person name="Yang X."/>
            <person name="Allen N.R."/>
            <person name="Anderson S."/>
            <person name="Asakawa T."/>
            <person name="Blechschmidt K."/>
            <person name="Bloom T."/>
            <person name="Borowsky M.L."/>
            <person name="Butler J."/>
            <person name="Cook A."/>
            <person name="Corum B."/>
            <person name="DeArellano K."/>
            <person name="DeCaprio D."/>
            <person name="Dooley K.T."/>
            <person name="Dorris L. III"/>
            <person name="Engels R."/>
            <person name="Gloeckner G."/>
            <person name="Hafez N."/>
            <person name="Hagopian D.S."/>
            <person name="Hall J.L."/>
            <person name="Ishikawa S.K."/>
            <person name="Jaffe D.B."/>
            <person name="Kamat A."/>
            <person name="Kudoh J."/>
            <person name="Lehmann R."/>
            <person name="Lokitsang T."/>
            <person name="Macdonald P."/>
            <person name="Major J.E."/>
            <person name="Matthews C.D."/>
            <person name="Mauceli E."/>
            <person name="Menzel U."/>
            <person name="Mihalev A.H."/>
            <person name="Minoshima S."/>
            <person name="Murayama Y."/>
            <person name="Naylor J.W."/>
            <person name="Nicol R."/>
            <person name="Nguyen C."/>
            <person name="O'Leary S.B."/>
            <person name="O'Neill K."/>
            <person name="Parker S.C.J."/>
            <person name="Polley A."/>
            <person name="Raymond C.K."/>
            <person name="Reichwald K."/>
            <person name="Rodriguez J."/>
            <person name="Sasaki T."/>
            <person name="Schilhabel M."/>
            <person name="Siddiqui R."/>
            <person name="Smith C.L."/>
            <person name="Sneddon T.P."/>
            <person name="Talamas J.A."/>
            <person name="Tenzin P."/>
            <person name="Topham K."/>
            <person name="Venkataraman V."/>
            <person name="Wen G."/>
            <person name="Yamazaki S."/>
            <person name="Young S.K."/>
            <person name="Zeng Q."/>
            <person name="Zimmer A.R."/>
            <person name="Rosenthal A."/>
            <person name="Birren B.W."/>
            <person name="Platzer M."/>
            <person name="Shimizu N."/>
            <person name="Lander E.S."/>
        </authorList>
    </citation>
    <scope>NUCLEOTIDE SEQUENCE [LARGE SCALE GENOMIC DNA]</scope>
</reference>
<reference key="6">
    <citation type="journal article" date="2004" name="Genome Res.">
        <title>The status, quality, and expansion of the NIH full-length cDNA project: the Mammalian Gene Collection (MGC).</title>
        <authorList>
            <consortium name="The MGC Project Team"/>
        </authorList>
    </citation>
    <scope>NUCLEOTIDE SEQUENCE [LARGE SCALE MRNA] OF 50-501 (ISOFORM 1)</scope>
</reference>
<reference evidence="10 12" key="7">
    <citation type="submission" date="2004-06" db="EMBL/GenBank/DDBJ databases">
        <title>Cloning of human full open reading frames in Gateway(TM) system entry vector (pDONR201).</title>
        <authorList>
            <person name="Ebert L."/>
            <person name="Schick M."/>
            <person name="Neubert P."/>
            <person name="Schatten R."/>
            <person name="Henze S."/>
            <person name="Korn B."/>
        </authorList>
    </citation>
    <scope>NUCLEOTIDE SEQUENCE [LARGE SCALE MRNA] OF 149-501 (ISOFORM 1)</scope>
</reference>
<reference key="8">
    <citation type="journal article" date="2013" name="J. Proteome Res.">
        <title>Toward a comprehensive characterization of a human cancer cell phosphoproteome.</title>
        <authorList>
            <person name="Zhou H."/>
            <person name="Di Palma S."/>
            <person name="Preisinger C."/>
            <person name="Peng M."/>
            <person name="Polat A.N."/>
            <person name="Heck A.J."/>
            <person name="Mohammed S."/>
        </authorList>
    </citation>
    <scope>PHOSPHORYLATION [LARGE SCALE ANALYSIS] AT THR-411</scope>
    <scope>IDENTIFICATION BY MASS SPECTROMETRY [LARGE SCALE ANALYSIS]</scope>
    <source>
        <tissue>Erythroleukemia</tissue>
    </source>
</reference>
<keyword id="KW-0025">Alternative splicing</keyword>
<keyword id="KW-0963">Cytoplasm</keyword>
<keyword id="KW-0524">Neurogenesis</keyword>
<keyword id="KW-0597">Phosphoprotein</keyword>
<keyword id="KW-1267">Proteomics identification</keyword>
<keyword id="KW-1185">Reference proteome</keyword>
<evidence type="ECO:0000250" key="1"/>
<evidence type="ECO:0000250" key="2">
    <source>
        <dbReference type="UniProtKB" id="Q91V36"/>
    </source>
</evidence>
<evidence type="ECO:0000255" key="3">
    <source>
        <dbReference type="PROSITE-ProRule" id="PRU00159"/>
    </source>
</evidence>
<evidence type="ECO:0000256" key="4">
    <source>
        <dbReference type="SAM" id="MobiDB-lite"/>
    </source>
</evidence>
<evidence type="ECO:0000269" key="5">
    <source>
    </source>
</evidence>
<evidence type="ECO:0000269" key="6">
    <source ref="1"/>
</evidence>
<evidence type="ECO:0000303" key="7">
    <source>
    </source>
</evidence>
<evidence type="ECO:0000303" key="8">
    <source>
    </source>
</evidence>
<evidence type="ECO:0000303" key="9">
    <source ref="1"/>
</evidence>
<evidence type="ECO:0000305" key="10"/>
<evidence type="ECO:0000312" key="11">
    <source>
        <dbReference type="EMBL" id="AAL55883.1"/>
    </source>
</evidence>
<evidence type="ECO:0000312" key="12">
    <source>
        <dbReference type="EMBL" id="AAQ18040.1"/>
    </source>
</evidence>
<evidence type="ECO:0000312" key="13">
    <source>
        <dbReference type="HGNC" id="HGNC:19339"/>
    </source>
</evidence>
<evidence type="ECO:0007744" key="14">
    <source>
    </source>
</evidence>
<protein>
    <recommendedName>
        <fullName>Nuclear receptor-binding protein 2</fullName>
    </recommendedName>
    <alternativeName>
        <fullName>Transformation-related gene 16 protein</fullName>
        <shortName>TRG-16</shortName>
    </alternativeName>
</protein>
<proteinExistence type="evidence at protein level"/>